<proteinExistence type="evidence at protein level"/>
<keyword id="KW-0002">3D-structure</keyword>
<keyword id="KW-0007">Acetylation</keyword>
<keyword id="KW-0025">Alternative splicing</keyword>
<keyword id="KW-0131">Cell cycle</keyword>
<keyword id="KW-0132">Cell division</keyword>
<keyword id="KW-0175">Coiled coil</keyword>
<keyword id="KW-0963">Cytoplasm</keyword>
<keyword id="KW-0206">Cytoskeleton</keyword>
<keyword id="KW-0493">Microtubule</keyword>
<keyword id="KW-0498">Mitosis</keyword>
<keyword id="KW-1267">Proteomics identification</keyword>
<keyword id="KW-1185">Reference proteome</keyword>
<dbReference type="EMBL" id="AF040964">
    <property type="protein sequence ID" value="AAB97010.1"/>
    <property type="status" value="ALT_INIT"/>
    <property type="molecule type" value="mRNA"/>
</dbReference>
<dbReference type="EMBL" id="AK293948">
    <property type="protein sequence ID" value="BAG57325.1"/>
    <property type="molecule type" value="mRNA"/>
</dbReference>
<dbReference type="EMBL" id="CR749640">
    <property type="protein sequence ID" value="CAH18434.1"/>
    <property type="molecule type" value="mRNA"/>
</dbReference>
<dbReference type="EMBL" id="AL158068">
    <property type="status" value="NOT_ANNOTATED_CDS"/>
    <property type="molecule type" value="Genomic_DNA"/>
</dbReference>
<dbReference type="EMBL" id="CH471131">
    <property type="protein sequence ID" value="EAW82537.1"/>
    <property type="molecule type" value="Genomic_DNA"/>
</dbReference>
<dbReference type="EMBL" id="BC003648">
    <property type="protein sequence ID" value="AAH03648.1"/>
    <property type="status" value="ALT_FRAME"/>
    <property type="molecule type" value="mRNA"/>
</dbReference>
<dbReference type="EMBL" id="BC025356">
    <property type="protein sequence ID" value="AAH25356.1"/>
    <property type="status" value="ALT_INIT"/>
    <property type="molecule type" value="mRNA"/>
</dbReference>
<dbReference type="CCDS" id="CCDS33941.1">
    <molecule id="Q68CZ6-1"/>
</dbReference>
<dbReference type="RefSeq" id="NP_001290072.1">
    <molecule id="Q68CZ6-1"/>
    <property type="nucleotide sequence ID" value="NM_001303143.2"/>
</dbReference>
<dbReference type="RefSeq" id="NP_078787.2">
    <molecule id="Q68CZ6-1"/>
    <property type="nucleotide sequence ID" value="NM_024511.7"/>
</dbReference>
<dbReference type="PDB" id="6PTB">
    <property type="method" value="X-ray"/>
    <property type="resolution" value="2.15 A"/>
    <property type="chains" value="C/F=154-162"/>
</dbReference>
<dbReference type="PDB" id="6PTE">
    <property type="method" value="X-ray"/>
    <property type="resolution" value="1.90 A"/>
    <property type="chains" value="C/D/G/J=154-162"/>
</dbReference>
<dbReference type="PDB" id="7SQK">
    <property type="method" value="EM"/>
    <property type="resolution" value="8.00 A"/>
    <property type="chains" value="C=1-603"/>
</dbReference>
<dbReference type="PDBsum" id="6PTB"/>
<dbReference type="PDBsum" id="6PTE"/>
<dbReference type="PDBsum" id="7SQK"/>
<dbReference type="EMDB" id="EMD-25387"/>
<dbReference type="SMR" id="Q68CZ6"/>
<dbReference type="BioGRID" id="122667">
    <property type="interactions" value="120"/>
</dbReference>
<dbReference type="ComplexPortal" id="CPX-1847">
    <property type="entry name" value="HAUS complex"/>
</dbReference>
<dbReference type="CORUM" id="Q68CZ6"/>
<dbReference type="DIP" id="DIP-48832N"/>
<dbReference type="FunCoup" id="Q68CZ6">
    <property type="interactions" value="2229"/>
</dbReference>
<dbReference type="IntAct" id="Q68CZ6">
    <property type="interactions" value="104"/>
</dbReference>
<dbReference type="MINT" id="Q68CZ6"/>
<dbReference type="STRING" id="9606.ENSP00000243706"/>
<dbReference type="iPTMnet" id="Q68CZ6"/>
<dbReference type="PhosphoSitePlus" id="Q68CZ6"/>
<dbReference type="BioMuta" id="HAUS3"/>
<dbReference type="DMDM" id="74708788"/>
<dbReference type="jPOST" id="Q68CZ6"/>
<dbReference type="MassIVE" id="Q68CZ6"/>
<dbReference type="PaxDb" id="9606-ENSP00000243706"/>
<dbReference type="PeptideAtlas" id="Q68CZ6"/>
<dbReference type="ProteomicsDB" id="4011"/>
<dbReference type="ProteomicsDB" id="66040">
    <molecule id="Q68CZ6-1"/>
</dbReference>
<dbReference type="Pumba" id="Q68CZ6"/>
<dbReference type="Antibodypedia" id="43178">
    <property type="antibodies" value="127 antibodies from 22 providers"/>
</dbReference>
<dbReference type="DNASU" id="79441"/>
<dbReference type="Ensembl" id="ENST00000243706.8">
    <molecule id="Q68CZ6-1"/>
    <property type="protein sequence ID" value="ENSP00000243706.4"/>
    <property type="gene ID" value="ENSG00000214367.10"/>
</dbReference>
<dbReference type="Ensembl" id="ENST00000443786.3">
    <molecule id="Q68CZ6-1"/>
    <property type="protein sequence ID" value="ENSP00000392903.2"/>
    <property type="gene ID" value="ENSG00000214367.10"/>
</dbReference>
<dbReference type="Ensembl" id="ENST00000506763.5">
    <molecule id="Q68CZ6-2"/>
    <property type="protein sequence ID" value="ENSP00000427350.1"/>
    <property type="gene ID" value="ENSG00000214367.10"/>
</dbReference>
<dbReference type="GeneID" id="79441"/>
<dbReference type="KEGG" id="hsa:79441"/>
<dbReference type="MANE-Select" id="ENST00000443786.3">
    <property type="protein sequence ID" value="ENSP00000392903.2"/>
    <property type="RefSeq nucleotide sequence ID" value="NM_001303143.2"/>
    <property type="RefSeq protein sequence ID" value="NP_001290072.1"/>
</dbReference>
<dbReference type="UCSC" id="uc003ges.2">
    <molecule id="Q68CZ6-1"/>
    <property type="organism name" value="human"/>
</dbReference>
<dbReference type="AGR" id="HGNC:28719"/>
<dbReference type="CTD" id="79441"/>
<dbReference type="DisGeNET" id="79441"/>
<dbReference type="GeneCards" id="HAUS3"/>
<dbReference type="HGNC" id="HGNC:28719">
    <property type="gene designation" value="HAUS3"/>
</dbReference>
<dbReference type="HPA" id="ENSG00000214367">
    <property type="expression patterns" value="Low tissue specificity"/>
</dbReference>
<dbReference type="MIM" id="613430">
    <property type="type" value="gene"/>
</dbReference>
<dbReference type="neXtProt" id="NX_Q68CZ6"/>
<dbReference type="OpenTargets" id="ENSG00000214367"/>
<dbReference type="PharmGKB" id="PA165664132"/>
<dbReference type="VEuPathDB" id="HostDB:ENSG00000214367"/>
<dbReference type="eggNOG" id="ENOG502R4I5">
    <property type="taxonomic scope" value="Eukaryota"/>
</dbReference>
<dbReference type="GeneTree" id="ENSGT00390000011904"/>
<dbReference type="HOGENOM" id="CLU_031795_0_0_1"/>
<dbReference type="InParanoid" id="Q68CZ6"/>
<dbReference type="OMA" id="LEWFCGN"/>
<dbReference type="OrthoDB" id="2159690at2759"/>
<dbReference type="PAN-GO" id="Q68CZ6">
    <property type="GO annotations" value="5 GO annotations based on evolutionary models"/>
</dbReference>
<dbReference type="PhylomeDB" id="Q68CZ6"/>
<dbReference type="TreeFam" id="TF331151"/>
<dbReference type="PathwayCommons" id="Q68CZ6"/>
<dbReference type="Reactome" id="R-HSA-2565942">
    <property type="pathway name" value="Regulation of PLK1 Activity at G2/M Transition"/>
</dbReference>
<dbReference type="Reactome" id="R-HSA-380259">
    <property type="pathway name" value="Loss of Nlp from mitotic centrosomes"/>
</dbReference>
<dbReference type="Reactome" id="R-HSA-380270">
    <property type="pathway name" value="Recruitment of mitotic centrosome proteins and complexes"/>
</dbReference>
<dbReference type="Reactome" id="R-HSA-380284">
    <property type="pathway name" value="Loss of proteins required for interphase microtubule organization from the centrosome"/>
</dbReference>
<dbReference type="Reactome" id="R-HSA-380320">
    <property type="pathway name" value="Recruitment of NuMA to mitotic centrosomes"/>
</dbReference>
<dbReference type="Reactome" id="R-HSA-5620912">
    <property type="pathway name" value="Anchoring of the basal body to the plasma membrane"/>
</dbReference>
<dbReference type="Reactome" id="R-HSA-8854518">
    <property type="pathway name" value="AURKA Activation by TPX2"/>
</dbReference>
<dbReference type="SignaLink" id="Q68CZ6"/>
<dbReference type="SIGNOR" id="Q68CZ6"/>
<dbReference type="BioGRID-ORCS" id="79441">
    <property type="hits" value="783 hits in 1167 CRISPR screens"/>
</dbReference>
<dbReference type="GeneWiki" id="HAUS3"/>
<dbReference type="GenomeRNAi" id="79441"/>
<dbReference type="Pharos" id="Q68CZ6">
    <property type="development level" value="Tbio"/>
</dbReference>
<dbReference type="PRO" id="PR:Q68CZ6"/>
<dbReference type="Proteomes" id="UP000005640">
    <property type="component" value="Chromosome 4"/>
</dbReference>
<dbReference type="RNAct" id="Q68CZ6">
    <property type="molecule type" value="protein"/>
</dbReference>
<dbReference type="Bgee" id="ENSG00000214367">
    <property type="expression patterns" value="Expressed in secondary oocyte and 180 other cell types or tissues"/>
</dbReference>
<dbReference type="ExpressionAtlas" id="Q68CZ6">
    <property type="expression patterns" value="baseline and differential"/>
</dbReference>
<dbReference type="GO" id="GO:0005813">
    <property type="term" value="C:centrosome"/>
    <property type="evidence" value="ECO:0000314"/>
    <property type="project" value="UniProtKB"/>
</dbReference>
<dbReference type="GO" id="GO:0036064">
    <property type="term" value="C:ciliary basal body"/>
    <property type="evidence" value="ECO:0000314"/>
    <property type="project" value="HPA"/>
</dbReference>
<dbReference type="GO" id="GO:0005929">
    <property type="term" value="C:cilium"/>
    <property type="evidence" value="ECO:0000314"/>
    <property type="project" value="HPA"/>
</dbReference>
<dbReference type="GO" id="GO:0005829">
    <property type="term" value="C:cytosol"/>
    <property type="evidence" value="ECO:0000304"/>
    <property type="project" value="Reactome"/>
</dbReference>
<dbReference type="GO" id="GO:0070652">
    <property type="term" value="C:HAUS complex"/>
    <property type="evidence" value="ECO:0000314"/>
    <property type="project" value="UniProtKB"/>
</dbReference>
<dbReference type="GO" id="GO:0045171">
    <property type="term" value="C:intercellular bridge"/>
    <property type="evidence" value="ECO:0000314"/>
    <property type="project" value="HPA"/>
</dbReference>
<dbReference type="GO" id="GO:0015630">
    <property type="term" value="C:microtubule cytoskeleton"/>
    <property type="evidence" value="ECO:0000314"/>
    <property type="project" value="HPA"/>
</dbReference>
<dbReference type="GO" id="GO:0005815">
    <property type="term" value="C:microtubule organizing center"/>
    <property type="evidence" value="ECO:0000318"/>
    <property type="project" value="GO_Central"/>
</dbReference>
<dbReference type="GO" id="GO:0005739">
    <property type="term" value="C:mitochondrion"/>
    <property type="evidence" value="ECO:0000314"/>
    <property type="project" value="HPA"/>
</dbReference>
<dbReference type="GO" id="GO:0072686">
    <property type="term" value="C:mitotic spindle"/>
    <property type="evidence" value="ECO:0000314"/>
    <property type="project" value="HPA"/>
</dbReference>
<dbReference type="GO" id="GO:1990498">
    <property type="term" value="C:mitotic spindle microtubule"/>
    <property type="evidence" value="ECO:0000314"/>
    <property type="project" value="UniProtKB"/>
</dbReference>
<dbReference type="GO" id="GO:0005654">
    <property type="term" value="C:nucleoplasm"/>
    <property type="evidence" value="ECO:0000314"/>
    <property type="project" value="HPA"/>
</dbReference>
<dbReference type="GO" id="GO:0051301">
    <property type="term" value="P:cell division"/>
    <property type="evidence" value="ECO:0007669"/>
    <property type="project" value="UniProtKB-KW"/>
</dbReference>
<dbReference type="GO" id="GO:0007098">
    <property type="term" value="P:centrosome cycle"/>
    <property type="evidence" value="ECO:0000315"/>
    <property type="project" value="UniProtKB"/>
</dbReference>
<dbReference type="GO" id="GO:0031023">
    <property type="term" value="P:microtubule organizing center organization"/>
    <property type="evidence" value="ECO:0000318"/>
    <property type="project" value="GO_Central"/>
</dbReference>
<dbReference type="GO" id="GO:0010968">
    <property type="term" value="P:regulation of microtubule nucleation"/>
    <property type="evidence" value="ECO:0000303"/>
    <property type="project" value="ComplexPortal"/>
</dbReference>
<dbReference type="GO" id="GO:0051225">
    <property type="term" value="P:spindle assembly"/>
    <property type="evidence" value="ECO:0000315"/>
    <property type="project" value="UniProtKB"/>
</dbReference>
<dbReference type="InterPro" id="IPR026206">
    <property type="entry name" value="HAUS3"/>
</dbReference>
<dbReference type="InterPro" id="IPR032733">
    <property type="entry name" value="HAUS3_N"/>
</dbReference>
<dbReference type="PANTHER" id="PTHR19378">
    <property type="entry name" value="GOLGIN- RELATED"/>
    <property type="match status" value="1"/>
</dbReference>
<dbReference type="PANTHER" id="PTHR19378:SF0">
    <property type="entry name" value="HAUS AUGMIN-LIKE COMPLEX SUBUNIT 3"/>
    <property type="match status" value="1"/>
</dbReference>
<dbReference type="Pfam" id="PF14932">
    <property type="entry name" value="HAUS-augmin3"/>
    <property type="match status" value="1"/>
</dbReference>
<dbReference type="PRINTS" id="PR02089">
    <property type="entry name" value="HAUSAUGMINL3"/>
</dbReference>
<protein>
    <recommendedName>
        <fullName>HAUS augmin-like complex subunit 3</fullName>
    </recommendedName>
</protein>
<comment type="function">
    <text evidence="3 4">Contributes to mitotic spindle assembly, maintenance of centrosome integrity and completion of cytokinesis as part of the HAUS augmin-like complex.</text>
</comment>
<comment type="subunit">
    <text evidence="3 4 5">Component of the HAUS augmin-like complex. The complex interacts with the gamma-tubulin ring complex and this interaction is required for spindle assembly. Interacts with EML3 (phosphorylated at 'Thr-881') (PubMed:30723163).</text>
</comment>
<comment type="interaction">
    <interactant intactId="EBI-2558217">
        <id>Q68CZ6</id>
    </interactant>
    <interactant intactId="EBI-17183751">
        <id>X5D778</id>
        <label>ANKRD11</label>
    </interactant>
    <organismsDiffer>false</organismsDiffer>
    <experiments>3</experiments>
</comment>
<comment type="interaction">
    <interactant intactId="EBI-2558217">
        <id>Q68CZ6</id>
    </interactant>
    <interactant intactId="EBI-741210">
        <id>Q0VDD7</id>
        <label>BRME1</label>
    </interactant>
    <organismsDiffer>false</organismsDiffer>
    <experiments>3</experiments>
</comment>
<comment type="interaction">
    <interactant intactId="EBI-2558217">
        <id>Q68CZ6</id>
    </interactant>
    <interactant intactId="EBI-725145">
        <id>O76071</id>
        <label>CIAO1</label>
    </interactant>
    <organismsDiffer>false</organismsDiffer>
    <experiments>3</experiments>
</comment>
<comment type="interaction">
    <interactant intactId="EBI-2558217">
        <id>Q68CZ6</id>
    </interactant>
    <interactant intactId="EBI-11427343">
        <id>Q9P2W3</id>
        <label>GNG13</label>
    </interactant>
    <organismsDiffer>false</organismsDiffer>
    <experiments>3</experiments>
</comment>
<comment type="interaction">
    <interactant intactId="EBI-2558217">
        <id>Q68CZ6</id>
    </interactant>
    <interactant intactId="EBI-2558196">
        <id>Q7Z4H7</id>
        <label>HAUS6</label>
    </interactant>
    <organismsDiffer>false</organismsDiffer>
    <experiments>4</experiments>
</comment>
<comment type="interaction">
    <interactant intactId="EBI-2558217">
        <id>Q68CZ6</id>
    </interactant>
    <interactant intactId="EBI-948266">
        <id>O14901</id>
        <label>KLF11</label>
    </interactant>
    <organismsDiffer>false</organismsDiffer>
    <experiments>3</experiments>
</comment>
<comment type="interaction">
    <interactant intactId="EBI-2558217">
        <id>Q68CZ6</id>
    </interactant>
    <interactant intactId="EBI-1504830">
        <id>Q9P2K3-2</id>
        <label>RCOR3</label>
    </interactant>
    <organismsDiffer>false</organismsDiffer>
    <experiments>3</experiments>
</comment>
<comment type="interaction">
    <interactant intactId="EBI-2558217">
        <id>Q68CZ6</id>
    </interactant>
    <interactant intactId="EBI-359793">
        <id>P40222</id>
        <label>TXLNA</label>
    </interactant>
    <organismsDiffer>false</organismsDiffer>
    <experiments>9</experiments>
</comment>
<comment type="interaction">
    <interactant intactId="EBI-2558217">
        <id>Q68CZ6</id>
    </interactant>
    <interactant intactId="EBI-6116822">
        <id>Q8N3L3</id>
        <label>TXLNB</label>
    </interactant>
    <organismsDiffer>false</organismsDiffer>
    <experiments>3</experiments>
</comment>
<comment type="subcellular location">
    <subcellularLocation>
        <location evidence="2 4">Cytoplasm</location>
        <location evidence="2 4">Cytoskeleton</location>
        <location evidence="2 4">Microtubule organizing center</location>
        <location evidence="2 4">Centrosome</location>
    </subcellularLocation>
    <subcellularLocation>
        <location evidence="4 5">Cytoplasm</location>
        <location evidence="4 5">Cytoskeleton</location>
        <location evidence="4 5">Spindle</location>
    </subcellularLocation>
    <text evidence="4 5">Localizes to interphase centrosomes and to mitotic spindle microtubules.</text>
</comment>
<comment type="alternative products">
    <event type="alternative splicing"/>
    <isoform>
        <id>Q68CZ6-1</id>
        <name>1</name>
        <sequence type="displayed"/>
    </isoform>
    <isoform>
        <id>Q68CZ6-2</id>
        <name>2</name>
        <sequence type="described" ref="VSP_057022 VSP_057023"/>
    </isoform>
</comment>
<comment type="similarity">
    <text evidence="7">Belongs to the HAUS3 family.</text>
</comment>
<comment type="sequence caution" evidence="7">
    <conflict type="erroneous initiation">
        <sequence resource="EMBL-CDS" id="AAB97010"/>
    </conflict>
    <text>Extended N-terminus.</text>
</comment>
<comment type="sequence caution" evidence="7">
    <conflict type="erroneous initiation">
        <sequence resource="EMBL-CDS" id="AAH03648"/>
    </conflict>
    <text>Truncated N-terminus.</text>
</comment>
<comment type="sequence caution" evidence="7">
    <conflict type="frameshift">
        <sequence resource="EMBL-CDS" id="AAH03648"/>
    </conflict>
</comment>
<comment type="sequence caution" evidence="7">
    <conflict type="erroneous initiation">
        <sequence resource="EMBL-CDS" id="AAH25356"/>
    </conflict>
    <text>Truncated N-terminus.</text>
</comment>
<accession>Q68CZ6</accession>
<accession>B4DF64</accession>
<accession>O43606</accession>
<accession>Q8TAZ5</accession>
<accession>Q9BTJ9</accession>
<feature type="initiator methionine" description="Removed" evidence="8">
    <location>
        <position position="1"/>
    </location>
</feature>
<feature type="chain" id="PRO_0000301951" description="HAUS augmin-like complex subunit 3">
    <location>
        <begin position="2"/>
        <end position="603"/>
    </location>
</feature>
<feature type="coiled-coil region" evidence="1">
    <location>
        <begin position="93"/>
        <end position="177"/>
    </location>
</feature>
<feature type="coiled-coil region" evidence="1">
    <location>
        <begin position="305"/>
        <end position="336"/>
    </location>
</feature>
<feature type="coiled-coil region" evidence="1">
    <location>
        <begin position="389"/>
        <end position="426"/>
    </location>
</feature>
<feature type="coiled-coil region" evidence="1">
    <location>
        <begin position="458"/>
        <end position="495"/>
    </location>
</feature>
<feature type="modified residue" description="N-acetylserine" evidence="8">
    <location>
        <position position="2"/>
    </location>
</feature>
<feature type="splice variant" id="VSP_057022" description="In isoform 2." evidence="6">
    <original>KLKQNISLVQDQL</original>
    <variation>AGEWHEPRRRGLQ</variation>
    <location>
        <begin position="477"/>
        <end position="489"/>
    </location>
</feature>
<feature type="splice variant" id="VSP_057023" description="In isoform 2." evidence="6">
    <location>
        <begin position="490"/>
        <end position="603"/>
    </location>
</feature>
<feature type="sequence variant" id="VAR_034912" description="In dbSNP:rs11937432.">
    <original>I</original>
    <variation>T</variation>
    <location>
        <position position="586"/>
    </location>
</feature>
<reference key="1">
    <citation type="submission" date="1998-01" db="EMBL/GenBank/DDBJ databases">
        <title>Comparison of exon trapping and sequence-based methods of gene finding.</title>
        <authorList>
            <person name="Pribill I."/>
            <person name="Barnes G.T."/>
            <person name="Chen J."/>
            <person name="Church D."/>
            <person name="Buckler A."/>
            <person name="Baxendale S."/>
            <person name="Bates G.P."/>
            <person name="Lehrach H."/>
            <person name="Gusella M.J."/>
            <person name="Duyao M.P."/>
            <person name="Ambrose C.M."/>
            <person name="MacDonald M.E."/>
            <person name="Gusella J.F."/>
        </authorList>
    </citation>
    <scope>NUCLEOTIDE SEQUENCE [MRNA] (ISOFORM 1)</scope>
</reference>
<reference key="2">
    <citation type="journal article" date="2004" name="Nat. Genet.">
        <title>Complete sequencing and characterization of 21,243 full-length human cDNAs.</title>
        <authorList>
            <person name="Ota T."/>
            <person name="Suzuki Y."/>
            <person name="Nishikawa T."/>
            <person name="Otsuki T."/>
            <person name="Sugiyama T."/>
            <person name="Irie R."/>
            <person name="Wakamatsu A."/>
            <person name="Hayashi K."/>
            <person name="Sato H."/>
            <person name="Nagai K."/>
            <person name="Kimura K."/>
            <person name="Makita H."/>
            <person name="Sekine M."/>
            <person name="Obayashi M."/>
            <person name="Nishi T."/>
            <person name="Shibahara T."/>
            <person name="Tanaka T."/>
            <person name="Ishii S."/>
            <person name="Yamamoto J."/>
            <person name="Saito K."/>
            <person name="Kawai Y."/>
            <person name="Isono Y."/>
            <person name="Nakamura Y."/>
            <person name="Nagahari K."/>
            <person name="Murakami K."/>
            <person name="Yasuda T."/>
            <person name="Iwayanagi T."/>
            <person name="Wagatsuma M."/>
            <person name="Shiratori A."/>
            <person name="Sudo H."/>
            <person name="Hosoiri T."/>
            <person name="Kaku Y."/>
            <person name="Kodaira H."/>
            <person name="Kondo H."/>
            <person name="Sugawara M."/>
            <person name="Takahashi M."/>
            <person name="Kanda K."/>
            <person name="Yokoi T."/>
            <person name="Furuya T."/>
            <person name="Kikkawa E."/>
            <person name="Omura Y."/>
            <person name="Abe K."/>
            <person name="Kamihara K."/>
            <person name="Katsuta N."/>
            <person name="Sato K."/>
            <person name="Tanikawa M."/>
            <person name="Yamazaki M."/>
            <person name="Ninomiya K."/>
            <person name="Ishibashi T."/>
            <person name="Yamashita H."/>
            <person name="Murakawa K."/>
            <person name="Fujimori K."/>
            <person name="Tanai H."/>
            <person name="Kimata M."/>
            <person name="Watanabe M."/>
            <person name="Hiraoka S."/>
            <person name="Chiba Y."/>
            <person name="Ishida S."/>
            <person name="Ono Y."/>
            <person name="Takiguchi S."/>
            <person name="Watanabe S."/>
            <person name="Yosida M."/>
            <person name="Hotuta T."/>
            <person name="Kusano J."/>
            <person name="Kanehori K."/>
            <person name="Takahashi-Fujii A."/>
            <person name="Hara H."/>
            <person name="Tanase T.-O."/>
            <person name="Nomura Y."/>
            <person name="Togiya S."/>
            <person name="Komai F."/>
            <person name="Hara R."/>
            <person name="Takeuchi K."/>
            <person name="Arita M."/>
            <person name="Imose N."/>
            <person name="Musashino K."/>
            <person name="Yuuki H."/>
            <person name="Oshima A."/>
            <person name="Sasaki N."/>
            <person name="Aotsuka S."/>
            <person name="Yoshikawa Y."/>
            <person name="Matsunawa H."/>
            <person name="Ichihara T."/>
            <person name="Shiohata N."/>
            <person name="Sano S."/>
            <person name="Moriya S."/>
            <person name="Momiyama H."/>
            <person name="Satoh N."/>
            <person name="Takami S."/>
            <person name="Terashima Y."/>
            <person name="Suzuki O."/>
            <person name="Nakagawa S."/>
            <person name="Senoh A."/>
            <person name="Mizoguchi H."/>
            <person name="Goto Y."/>
            <person name="Shimizu F."/>
            <person name="Wakebe H."/>
            <person name="Hishigaki H."/>
            <person name="Watanabe T."/>
            <person name="Sugiyama A."/>
            <person name="Takemoto M."/>
            <person name="Kawakami B."/>
            <person name="Yamazaki M."/>
            <person name="Watanabe K."/>
            <person name="Kumagai A."/>
            <person name="Itakura S."/>
            <person name="Fukuzumi Y."/>
            <person name="Fujimori Y."/>
            <person name="Komiyama M."/>
            <person name="Tashiro H."/>
            <person name="Tanigami A."/>
            <person name="Fujiwara T."/>
            <person name="Ono T."/>
            <person name="Yamada K."/>
            <person name="Fujii Y."/>
            <person name="Ozaki K."/>
            <person name="Hirao M."/>
            <person name="Ohmori Y."/>
            <person name="Kawabata A."/>
            <person name="Hikiji T."/>
            <person name="Kobatake N."/>
            <person name="Inagaki H."/>
            <person name="Ikema Y."/>
            <person name="Okamoto S."/>
            <person name="Okitani R."/>
            <person name="Kawakami T."/>
            <person name="Noguchi S."/>
            <person name="Itoh T."/>
            <person name="Shigeta K."/>
            <person name="Senba T."/>
            <person name="Matsumura K."/>
            <person name="Nakajima Y."/>
            <person name="Mizuno T."/>
            <person name="Morinaga M."/>
            <person name="Sasaki M."/>
            <person name="Togashi T."/>
            <person name="Oyama M."/>
            <person name="Hata H."/>
            <person name="Watanabe M."/>
            <person name="Komatsu T."/>
            <person name="Mizushima-Sugano J."/>
            <person name="Satoh T."/>
            <person name="Shirai Y."/>
            <person name="Takahashi Y."/>
            <person name="Nakagawa K."/>
            <person name="Okumura K."/>
            <person name="Nagase T."/>
            <person name="Nomura N."/>
            <person name="Kikuchi H."/>
            <person name="Masuho Y."/>
            <person name="Yamashita R."/>
            <person name="Nakai K."/>
            <person name="Yada T."/>
            <person name="Nakamura Y."/>
            <person name="Ohara O."/>
            <person name="Isogai T."/>
            <person name="Sugano S."/>
        </authorList>
    </citation>
    <scope>NUCLEOTIDE SEQUENCE [LARGE SCALE MRNA] (ISOFORM 2)</scope>
    <source>
        <tissue>Cerebellum</tissue>
    </source>
</reference>
<reference key="3">
    <citation type="journal article" date="2007" name="BMC Genomics">
        <title>The full-ORF clone resource of the German cDNA consortium.</title>
        <authorList>
            <person name="Bechtel S."/>
            <person name="Rosenfelder H."/>
            <person name="Duda A."/>
            <person name="Schmidt C.P."/>
            <person name="Ernst U."/>
            <person name="Wellenreuther R."/>
            <person name="Mehrle A."/>
            <person name="Schuster C."/>
            <person name="Bahr A."/>
            <person name="Bloecker H."/>
            <person name="Heubner D."/>
            <person name="Hoerlein A."/>
            <person name="Michel G."/>
            <person name="Wedler H."/>
            <person name="Koehrer K."/>
            <person name="Ottenwaelder B."/>
            <person name="Poustka A."/>
            <person name="Wiemann S."/>
            <person name="Schupp I."/>
        </authorList>
    </citation>
    <scope>NUCLEOTIDE SEQUENCE [LARGE SCALE MRNA] (ISOFORM 1)</scope>
    <source>
        <tissue>Endometrial adenocarcinoma</tissue>
    </source>
</reference>
<reference key="4">
    <citation type="journal article" date="2005" name="Nature">
        <title>Generation and annotation of the DNA sequences of human chromosomes 2 and 4.</title>
        <authorList>
            <person name="Hillier L.W."/>
            <person name="Graves T.A."/>
            <person name="Fulton R.S."/>
            <person name="Fulton L.A."/>
            <person name="Pepin K.H."/>
            <person name="Minx P."/>
            <person name="Wagner-McPherson C."/>
            <person name="Layman D."/>
            <person name="Wylie K."/>
            <person name="Sekhon M."/>
            <person name="Becker M.C."/>
            <person name="Fewell G.A."/>
            <person name="Delehaunty K.D."/>
            <person name="Miner T.L."/>
            <person name="Nash W.E."/>
            <person name="Kremitzki C."/>
            <person name="Oddy L."/>
            <person name="Du H."/>
            <person name="Sun H."/>
            <person name="Bradshaw-Cordum H."/>
            <person name="Ali J."/>
            <person name="Carter J."/>
            <person name="Cordes M."/>
            <person name="Harris A."/>
            <person name="Isak A."/>
            <person name="van Brunt A."/>
            <person name="Nguyen C."/>
            <person name="Du F."/>
            <person name="Courtney L."/>
            <person name="Kalicki J."/>
            <person name="Ozersky P."/>
            <person name="Abbott S."/>
            <person name="Armstrong J."/>
            <person name="Belter E.A."/>
            <person name="Caruso L."/>
            <person name="Cedroni M."/>
            <person name="Cotton M."/>
            <person name="Davidson T."/>
            <person name="Desai A."/>
            <person name="Elliott G."/>
            <person name="Erb T."/>
            <person name="Fronick C."/>
            <person name="Gaige T."/>
            <person name="Haakenson W."/>
            <person name="Haglund K."/>
            <person name="Holmes A."/>
            <person name="Harkins R."/>
            <person name="Kim K."/>
            <person name="Kruchowski S.S."/>
            <person name="Strong C.M."/>
            <person name="Grewal N."/>
            <person name="Goyea E."/>
            <person name="Hou S."/>
            <person name="Levy A."/>
            <person name="Martinka S."/>
            <person name="Mead K."/>
            <person name="McLellan M.D."/>
            <person name="Meyer R."/>
            <person name="Randall-Maher J."/>
            <person name="Tomlinson C."/>
            <person name="Dauphin-Kohlberg S."/>
            <person name="Kozlowicz-Reilly A."/>
            <person name="Shah N."/>
            <person name="Swearengen-Shahid S."/>
            <person name="Snider J."/>
            <person name="Strong J.T."/>
            <person name="Thompson J."/>
            <person name="Yoakum M."/>
            <person name="Leonard S."/>
            <person name="Pearman C."/>
            <person name="Trani L."/>
            <person name="Radionenko M."/>
            <person name="Waligorski J.E."/>
            <person name="Wang C."/>
            <person name="Rock S.M."/>
            <person name="Tin-Wollam A.-M."/>
            <person name="Maupin R."/>
            <person name="Latreille P."/>
            <person name="Wendl M.C."/>
            <person name="Yang S.-P."/>
            <person name="Pohl C."/>
            <person name="Wallis J.W."/>
            <person name="Spieth J."/>
            <person name="Bieri T.A."/>
            <person name="Berkowicz N."/>
            <person name="Nelson J.O."/>
            <person name="Osborne J."/>
            <person name="Ding L."/>
            <person name="Meyer R."/>
            <person name="Sabo A."/>
            <person name="Shotland Y."/>
            <person name="Sinha P."/>
            <person name="Wohldmann P.E."/>
            <person name="Cook L.L."/>
            <person name="Hickenbotham M.T."/>
            <person name="Eldred J."/>
            <person name="Williams D."/>
            <person name="Jones T.A."/>
            <person name="She X."/>
            <person name="Ciccarelli F.D."/>
            <person name="Izaurralde E."/>
            <person name="Taylor J."/>
            <person name="Schmutz J."/>
            <person name="Myers R.M."/>
            <person name="Cox D.R."/>
            <person name="Huang X."/>
            <person name="McPherson J.D."/>
            <person name="Mardis E.R."/>
            <person name="Clifton S.W."/>
            <person name="Warren W.C."/>
            <person name="Chinwalla A.T."/>
            <person name="Eddy S.R."/>
            <person name="Marra M.A."/>
            <person name="Ovcharenko I."/>
            <person name="Furey T.S."/>
            <person name="Miller W."/>
            <person name="Eichler E.E."/>
            <person name="Bork P."/>
            <person name="Suyama M."/>
            <person name="Torrents D."/>
            <person name="Waterston R.H."/>
            <person name="Wilson R.K."/>
        </authorList>
    </citation>
    <scope>NUCLEOTIDE SEQUENCE [LARGE SCALE GENOMIC DNA]</scope>
</reference>
<reference key="5">
    <citation type="submission" date="2005-09" db="EMBL/GenBank/DDBJ databases">
        <authorList>
            <person name="Mural R.J."/>
            <person name="Istrail S."/>
            <person name="Sutton G.G."/>
            <person name="Florea L."/>
            <person name="Halpern A.L."/>
            <person name="Mobarry C.M."/>
            <person name="Lippert R."/>
            <person name="Walenz B."/>
            <person name="Shatkay H."/>
            <person name="Dew I."/>
            <person name="Miller J.R."/>
            <person name="Flanigan M.J."/>
            <person name="Edwards N.J."/>
            <person name="Bolanos R."/>
            <person name="Fasulo D."/>
            <person name="Halldorsson B.V."/>
            <person name="Hannenhalli S."/>
            <person name="Turner R."/>
            <person name="Yooseph S."/>
            <person name="Lu F."/>
            <person name="Nusskern D.R."/>
            <person name="Shue B.C."/>
            <person name="Zheng X.H."/>
            <person name="Zhong F."/>
            <person name="Delcher A.L."/>
            <person name="Huson D.H."/>
            <person name="Kravitz S.A."/>
            <person name="Mouchard L."/>
            <person name="Reinert K."/>
            <person name="Remington K.A."/>
            <person name="Clark A.G."/>
            <person name="Waterman M.S."/>
            <person name="Eichler E.E."/>
            <person name="Adams M.D."/>
            <person name="Hunkapiller M.W."/>
            <person name="Myers E.W."/>
            <person name="Venter J.C."/>
        </authorList>
    </citation>
    <scope>NUCLEOTIDE SEQUENCE [LARGE SCALE GENOMIC DNA]</scope>
</reference>
<reference key="6">
    <citation type="journal article" date="2004" name="Genome Res.">
        <title>The status, quality, and expansion of the NIH full-length cDNA project: the Mammalian Gene Collection (MGC).</title>
        <authorList>
            <consortium name="The MGC Project Team"/>
        </authorList>
    </citation>
    <scope>NUCLEOTIDE SEQUENCE [LARGE SCALE MRNA] (ISOFORM 1)</scope>
    <source>
        <tissue>Lung carcinoma</tissue>
        <tissue>Rhabdomyosarcoma</tissue>
    </source>
</reference>
<reference key="7">
    <citation type="journal article" date="2003" name="Nature">
        <title>Proteomic characterization of the human centrosome by protein correlation profiling.</title>
        <authorList>
            <person name="Andersen J.S."/>
            <person name="Wilkinson C.J."/>
            <person name="Mayor T."/>
            <person name="Mortensen P."/>
            <person name="Nigg E.A."/>
            <person name="Mann M."/>
        </authorList>
    </citation>
    <scope>IDENTIFICATION BY MASS SPECTROMETRY</scope>
    <scope>SUBCELLULAR LOCATION [LARGE SCALE ANALYSIS]</scope>
    <source>
        <tissue>Lymphoblast</tissue>
    </source>
</reference>
<reference key="8">
    <citation type="journal article" date="2009" name="Anal. Chem.">
        <title>Lys-N and trypsin cover complementary parts of the phosphoproteome in a refined SCX-based approach.</title>
        <authorList>
            <person name="Gauci S."/>
            <person name="Helbig A.O."/>
            <person name="Slijper M."/>
            <person name="Krijgsveld J."/>
            <person name="Heck A.J."/>
            <person name="Mohammed S."/>
        </authorList>
    </citation>
    <scope>ACETYLATION [LARGE SCALE ANALYSIS] AT SER-2</scope>
    <scope>CLEAVAGE OF INITIATOR METHIONINE [LARGE SCALE ANALYSIS]</scope>
    <scope>IDENTIFICATION BY MASS SPECTROMETRY [LARGE SCALE ANALYSIS]</scope>
</reference>
<reference key="9">
    <citation type="journal article" date="2009" name="Curr. Biol.">
        <title>HAUS, the 8-subunit human augmin complex, regulates centrosome and spindle integrity.</title>
        <authorList>
            <person name="Lawo S."/>
            <person name="Bashkurov M."/>
            <person name="Mullin M."/>
            <person name="Ferreria M.G."/>
            <person name="Kittler R."/>
            <person name="Habermann B."/>
            <person name="Tagliaferro A."/>
            <person name="Poser I."/>
            <person name="Hutchins J.R.A."/>
            <person name="Hegemann B."/>
            <person name="Pinchev D."/>
            <person name="Buchholz F."/>
            <person name="Peters J.-M."/>
            <person name="Hyman A.A."/>
            <person name="Gingras A.-C."/>
            <person name="Pelletier L."/>
        </authorList>
    </citation>
    <scope>IDENTIFICATION IN THE HAUS AUGMIN-LIKE COMPLEX</scope>
    <scope>FUNCTION</scope>
</reference>
<reference key="10">
    <citation type="journal article" date="2009" name="Proc. Natl. Acad. Sci. U.S.A.">
        <title>The augmin complex plays a critical role in spindle microtubule generation for mitotic progression and cytokinesis in human cells.</title>
        <authorList>
            <person name="Uehara R."/>
            <person name="Nozawa R.-S."/>
            <person name="Tomioka A."/>
            <person name="Petry S."/>
            <person name="Vale R.D."/>
            <person name="Obuse C."/>
            <person name="Goshima G."/>
        </authorList>
    </citation>
    <scope>IDENTIFICATION IN THE HAUS AUGMIN-LIKE COMPLEX</scope>
    <scope>FUNCTION</scope>
    <scope>SUBCELLULAR LOCATION</scope>
</reference>
<reference key="11">
    <citation type="journal article" date="2019" name="J. Biol. Chem.">
        <title>The microtubule-associated protein EML3 regulates mitotic spindle assembly by recruiting the Augmin complex to spindle microtubules.</title>
        <authorList>
            <person name="Luo J."/>
            <person name="Yang B."/>
            <person name="Xin G."/>
            <person name="Sun M."/>
            <person name="Zhang B."/>
            <person name="Guo X."/>
            <person name="Jiang Q."/>
            <person name="Zhang C."/>
        </authorList>
    </citation>
    <scope>INTERACTION WITH EML3</scope>
    <scope>SUBCELLULAR LOCATION</scope>
</reference>
<sequence>MSCGNEFVETLKKIGYPKADNLNGEDFDWLFEGVEDESFLKWFCGNVNEQNVLSERELEAFSILQKSGKPILEGAALDEALKTCKTSDLKTPRLDDKELEKLEDEVQTLLKLKNLKIQRRNKCQLMASVTSHKSLRLNAKEEEATKKLKQSQGILNAMITKISNELQALTDEVTQLMMFFRHSNLGQGTNPLVFLSQFSLEKYLSQEEQSTAALTLYTKKQFFQGIHEVVESSNEDNFQLLDIQTPSICDNQEILEERRLEMARLQLAYICAQHQLIHLKASNSSMKSSIKWAEESLHSLTSKAVDKENLDAKISSLTSEIMKLEKEVTQIKDRSLPAVVRENAQLLNMPVVKGDFDLQIAKQDYYTARQELVLNQLIKQKASFELLQLSYEIELRKHRDIYRQLENLVQELSQSNMMLYKQLEMLTDPSVSQQINPRNTIDTKDYSTHRLYQVLEGENKKKELFLTHGNLEEVAEKLKQNISLVQDQLAVSAQEHSFFLSKRNKDVDMLCDTLYQGGNQLLLSDQELTEQFHKVESQLNKLNHLLTDILADVKTKRKTLANNKLHQMEREFYVYFLKDEDYLKDIVENLETQSKIKAVSLED</sequence>
<evidence type="ECO:0000255" key="1"/>
<evidence type="ECO:0000269" key="2">
    <source>
    </source>
</evidence>
<evidence type="ECO:0000269" key="3">
    <source>
    </source>
</evidence>
<evidence type="ECO:0000269" key="4">
    <source>
    </source>
</evidence>
<evidence type="ECO:0000269" key="5">
    <source>
    </source>
</evidence>
<evidence type="ECO:0000303" key="6">
    <source>
    </source>
</evidence>
<evidence type="ECO:0000305" key="7"/>
<evidence type="ECO:0007744" key="8">
    <source>
    </source>
</evidence>
<organism>
    <name type="scientific">Homo sapiens</name>
    <name type="common">Human</name>
    <dbReference type="NCBI Taxonomy" id="9606"/>
    <lineage>
        <taxon>Eukaryota</taxon>
        <taxon>Metazoa</taxon>
        <taxon>Chordata</taxon>
        <taxon>Craniata</taxon>
        <taxon>Vertebrata</taxon>
        <taxon>Euteleostomi</taxon>
        <taxon>Mammalia</taxon>
        <taxon>Eutheria</taxon>
        <taxon>Euarchontoglires</taxon>
        <taxon>Primates</taxon>
        <taxon>Haplorrhini</taxon>
        <taxon>Catarrhini</taxon>
        <taxon>Hominidae</taxon>
        <taxon>Homo</taxon>
    </lineage>
</organism>
<gene>
    <name type="primary">HAUS3</name>
    <name type="synonym">C4orf15</name>
</gene>
<name>HAUS3_HUMAN</name>